<proteinExistence type="inferred from homology"/>
<organism>
    <name type="scientific">Invertebrate iridescent virus 6</name>
    <name type="common">IIV-6</name>
    <name type="synonym">Chilo iridescent virus</name>
    <dbReference type="NCBI Taxonomy" id="176652"/>
    <lineage>
        <taxon>Viruses</taxon>
        <taxon>Varidnaviria</taxon>
        <taxon>Bamfordvirae</taxon>
        <taxon>Nucleocytoviricota</taxon>
        <taxon>Megaviricetes</taxon>
        <taxon>Pimascovirales</taxon>
        <taxon>Iridoviridae</taxon>
        <taxon>Betairidovirinae</taxon>
        <taxon>Iridovirus</taxon>
    </lineage>
</organism>
<evidence type="ECO:0000255" key="1">
    <source>
        <dbReference type="PROSITE-ProRule" id="PRU00029"/>
    </source>
</evidence>
<evidence type="ECO:0000255" key="2">
    <source>
        <dbReference type="PROSITE-ProRule" id="PRU00175"/>
    </source>
</evidence>
<evidence type="ECO:0000256" key="3">
    <source>
        <dbReference type="SAM" id="MobiDB-lite"/>
    </source>
</evidence>
<evidence type="ECO:0000269" key="4">
    <source>
    </source>
</evidence>
<evidence type="ECO:0000305" key="5"/>
<accession>P47732</accession>
<accession>O55770</accession>
<feature type="chain" id="PRO_0000122384" description="Apoptosis inhibitor 193R">
    <location>
        <begin position="1"/>
        <end position="208"/>
    </location>
</feature>
<feature type="repeat" description="BIR">
    <location>
        <begin position="37"/>
        <end position="108"/>
    </location>
</feature>
<feature type="repeat" description="1">
    <location>
        <begin position="134"/>
        <end position="139"/>
    </location>
</feature>
<feature type="repeat" description="2">
    <location>
        <begin position="140"/>
        <end position="145"/>
    </location>
</feature>
<feature type="repeat" description="3">
    <location>
        <begin position="146"/>
        <end position="151"/>
    </location>
</feature>
<feature type="zinc finger region" description="RING-type" evidence="2">
    <location>
        <begin position="163"/>
        <end position="197"/>
    </location>
</feature>
<feature type="region of interest" description="Disordered" evidence="3">
    <location>
        <begin position="1"/>
        <end position="25"/>
    </location>
</feature>
<feature type="region of interest" description="3 X 6 AA tandem repeats">
    <location>
        <begin position="134"/>
        <end position="151"/>
    </location>
</feature>
<feature type="compositionally biased region" description="Acidic residues" evidence="3">
    <location>
        <begin position="10"/>
        <end position="23"/>
    </location>
</feature>
<feature type="binding site" evidence="1">
    <location>
        <position position="74"/>
    </location>
    <ligand>
        <name>Zn(2+)</name>
        <dbReference type="ChEBI" id="CHEBI:29105"/>
    </ligand>
</feature>
<feature type="binding site" evidence="1">
    <location>
        <position position="77"/>
    </location>
    <ligand>
        <name>Zn(2+)</name>
        <dbReference type="ChEBI" id="CHEBI:29105"/>
    </ligand>
</feature>
<feature type="binding site" evidence="1">
    <location>
        <position position="94"/>
    </location>
    <ligand>
        <name>Zn(2+)</name>
        <dbReference type="ChEBI" id="CHEBI:29105"/>
    </ligand>
</feature>
<feature type="binding site" evidence="1">
    <location>
        <position position="105"/>
    </location>
    <ligand>
        <name>Zn(2+)</name>
        <dbReference type="ChEBI" id="CHEBI:29105"/>
    </ligand>
</feature>
<comment type="function">
    <text evidence="4">Plays a role early in infection by preventing host cell apoptosis.</text>
</comment>
<comment type="similarity">
    <text evidence="5">Belongs to the IIV-6 193R family.</text>
</comment>
<protein>
    <recommendedName>
        <fullName>Apoptosis inhibitor 193R</fullName>
    </recommendedName>
</protein>
<name>VF193_IIV6</name>
<gene>
    <name type="ORF">IIV6-193R</name>
</gene>
<keyword id="KW-0053">Apoptosis</keyword>
<keyword id="KW-0244">Early protein</keyword>
<keyword id="KW-0945">Host-virus interaction</keyword>
<keyword id="KW-1085">Inhibition of host caspases by virus</keyword>
<keyword id="KW-0479">Metal-binding</keyword>
<keyword id="KW-1119">Modulation of host cell apoptosis by virus</keyword>
<keyword id="KW-1185">Reference proteome</keyword>
<keyword id="KW-0677">Repeat</keyword>
<keyword id="KW-0862">Zinc</keyword>
<keyword id="KW-0863">Zinc-finger</keyword>
<dbReference type="EMBL" id="AF303741">
    <property type="protein sequence ID" value="AAB94481.1"/>
    <property type="molecule type" value="Genomic_DNA"/>
</dbReference>
<dbReference type="PIR" id="T03183">
    <property type="entry name" value="T03183"/>
</dbReference>
<dbReference type="RefSeq" id="NP_149656.1">
    <property type="nucleotide sequence ID" value="NC_003038.1"/>
</dbReference>
<dbReference type="SMR" id="P47732"/>
<dbReference type="KEGG" id="vg:1733224"/>
<dbReference type="OrthoDB" id="9255at10239"/>
<dbReference type="Proteomes" id="UP000001359">
    <property type="component" value="Genome"/>
</dbReference>
<dbReference type="GO" id="GO:0008270">
    <property type="term" value="F:zinc ion binding"/>
    <property type="evidence" value="ECO:0007669"/>
    <property type="project" value="UniProtKB-KW"/>
</dbReference>
<dbReference type="GO" id="GO:0033668">
    <property type="term" value="P:symbiont-mediated suppression of host apoptosis"/>
    <property type="evidence" value="ECO:0007669"/>
    <property type="project" value="UniProtKB-KW"/>
</dbReference>
<dbReference type="CDD" id="cd00022">
    <property type="entry name" value="BIR"/>
    <property type="match status" value="1"/>
</dbReference>
<dbReference type="Gene3D" id="1.10.1170.10">
    <property type="entry name" value="Inhibitor Of Apoptosis Protein (2mihbC-IAP-1), Chain A"/>
    <property type="match status" value="1"/>
</dbReference>
<dbReference type="Gene3D" id="3.30.40.10">
    <property type="entry name" value="Zinc/RING finger domain, C3HC4 (zinc finger)"/>
    <property type="match status" value="1"/>
</dbReference>
<dbReference type="InterPro" id="IPR001370">
    <property type="entry name" value="BIR_rpt"/>
</dbReference>
<dbReference type="InterPro" id="IPR050784">
    <property type="entry name" value="IAP"/>
</dbReference>
<dbReference type="InterPro" id="IPR001841">
    <property type="entry name" value="Znf_RING"/>
</dbReference>
<dbReference type="InterPro" id="IPR013083">
    <property type="entry name" value="Znf_RING/FYVE/PHD"/>
</dbReference>
<dbReference type="PANTHER" id="PTHR10044">
    <property type="entry name" value="INHIBITOR OF APOPTOSIS"/>
    <property type="match status" value="1"/>
</dbReference>
<dbReference type="Pfam" id="PF00653">
    <property type="entry name" value="BIR"/>
    <property type="match status" value="1"/>
</dbReference>
<dbReference type="Pfam" id="PF13920">
    <property type="entry name" value="zf-C3HC4_3"/>
    <property type="match status" value="1"/>
</dbReference>
<dbReference type="SMART" id="SM00238">
    <property type="entry name" value="BIR"/>
    <property type="match status" value="1"/>
</dbReference>
<dbReference type="SMART" id="SM00184">
    <property type="entry name" value="RING"/>
    <property type="match status" value="1"/>
</dbReference>
<dbReference type="SUPFAM" id="SSF57924">
    <property type="entry name" value="Inhibitor of apoptosis (IAP) repeat"/>
    <property type="match status" value="1"/>
</dbReference>
<dbReference type="PROSITE" id="PS50143">
    <property type="entry name" value="BIR_REPEAT_2"/>
    <property type="match status" value="1"/>
</dbReference>
<dbReference type="PROSITE" id="PS50089">
    <property type="entry name" value="ZF_RING_2"/>
    <property type="match status" value="1"/>
</dbReference>
<organismHost>
    <name type="scientific">Acheta domesticus</name>
    <name type="common">House cricket</name>
    <dbReference type="NCBI Taxonomy" id="6997"/>
</organismHost>
<organismHost>
    <name type="scientific">Chilo suppressalis</name>
    <name type="common">Asiatic rice borer moth</name>
    <dbReference type="NCBI Taxonomy" id="168631"/>
</organismHost>
<organismHost>
    <name type="scientific">Gryllus bimaculatus</name>
    <name type="common">Two-spotted cricket</name>
    <dbReference type="NCBI Taxonomy" id="6999"/>
</organismHost>
<organismHost>
    <name type="scientific">Gryllus campestris</name>
    <dbReference type="NCBI Taxonomy" id="58607"/>
</organismHost>
<organismHost>
    <name type="scientific">Spodoptera frugiperda</name>
    <name type="common">Fall armyworm</name>
    <dbReference type="NCBI Taxonomy" id="7108"/>
</organismHost>
<sequence>MDTCGIYNSDNEEFSQENDGENDGGDKIIKNLPFASYDERLNSFQNWPIQLLPSKEQLSRAGFIYLNIGDQVQCFYCDLKLKEWKRSDNPFEEHKKHTQDLKINCLFVKSIEFDNFVKNHSESCFQNPITNNINQDLDHNQDLDHNQDLDQNSTTSDCDVLTCKICFTNKITKVLIPCGHSSCYECVFKLQTCPICKNNFIKINNLFI</sequence>
<reference key="1">
    <citation type="journal article" date="2001" name="Virology">
        <title>Analysis of the first complete DNA sequence of an invertebrate iridovirus: coding strategy of the genome of Chilo iridescent virus.</title>
        <authorList>
            <person name="Jakob N.J."/>
            <person name="Mueller K."/>
            <person name="Bahr U."/>
            <person name="Darai G."/>
        </authorList>
    </citation>
    <scope>NUCLEOTIDE SEQUENCE [LARGE SCALE GENOMIC DNA]</scope>
</reference>
<reference key="2">
    <citation type="journal article" date="2007" name="Virol. J.">
        <title>Comparative genomic analysis of the family Iridoviridae: re-annotating and defining the core set of iridovirus genes.</title>
        <authorList>
            <person name="Eaton H.E."/>
            <person name="Metcalf J."/>
            <person name="Penny E."/>
            <person name="Tcherepanov V."/>
            <person name="Upton C."/>
            <person name="Brunetti C.R."/>
        </authorList>
    </citation>
    <scope>GENOME REANNOTATION</scope>
</reference>
<reference key="3">
    <citation type="journal article" date="2008" name="Virology">
        <title>Open reading frame 193R of Chilo iridescent virus encodes a functional inhibitor of apoptosis (IAP).</title>
        <authorList>
            <person name="Ince I.A."/>
            <person name="Westenberg M."/>
            <person name="Vlak J.M."/>
            <person name="Demirbag Z."/>
            <person name="Nalcacioglu R."/>
            <person name="van Oers M.M."/>
        </authorList>
    </citation>
    <scope>FUNCTION</scope>
</reference>